<reference key="1">
    <citation type="journal article" date="1996" name="Science">
        <title>Complete genome sequence of the methanogenic archaeon, Methanococcus jannaschii.</title>
        <authorList>
            <person name="Bult C.J."/>
            <person name="White O."/>
            <person name="Olsen G.J."/>
            <person name="Zhou L."/>
            <person name="Fleischmann R.D."/>
            <person name="Sutton G.G."/>
            <person name="Blake J.A."/>
            <person name="FitzGerald L.M."/>
            <person name="Clayton R.A."/>
            <person name="Gocayne J.D."/>
            <person name="Kerlavage A.R."/>
            <person name="Dougherty B.A."/>
            <person name="Tomb J.-F."/>
            <person name="Adams M.D."/>
            <person name="Reich C.I."/>
            <person name="Overbeek R."/>
            <person name="Kirkness E.F."/>
            <person name="Weinstock K.G."/>
            <person name="Merrick J.M."/>
            <person name="Glodek A."/>
            <person name="Scott J.L."/>
            <person name="Geoghagen N.S.M."/>
            <person name="Weidman J.F."/>
            <person name="Fuhrmann J.L."/>
            <person name="Nguyen D."/>
            <person name="Utterback T.R."/>
            <person name="Kelley J.M."/>
            <person name="Peterson J.D."/>
            <person name="Sadow P.W."/>
            <person name="Hanna M.C."/>
            <person name="Cotton M.D."/>
            <person name="Roberts K.M."/>
            <person name="Hurst M.A."/>
            <person name="Kaine B.P."/>
            <person name="Borodovsky M."/>
            <person name="Klenk H.-P."/>
            <person name="Fraser C.M."/>
            <person name="Smith H.O."/>
            <person name="Woese C.R."/>
            <person name="Venter J.C."/>
        </authorList>
    </citation>
    <scope>NUCLEOTIDE SEQUENCE [LARGE SCALE GENOMIC DNA]</scope>
    <source>
        <strain>ATCC 43067 / DSM 2661 / JAL-1 / JCM 10045 / NBRC 100440</strain>
    </source>
</reference>
<reference key="2">
    <citation type="journal article" date="2008" name="EMBO J.">
        <title>Structure of the archaeal Kae1/Bud32 fusion protein MJ1130: a model for the eukaryotic EKC/KEOPS subcomplex.</title>
        <authorList>
            <person name="Hecker A."/>
            <person name="Lopreiato R."/>
            <person name="Graille M."/>
            <person name="Collinet B."/>
            <person name="Forterre P."/>
            <person name="Libri D."/>
            <person name="van Tilbeurgh H."/>
        </authorList>
    </citation>
    <scope>X-RAY CRYSTALLOGRAPHY (3.05 ANGSTROMS) IN COMPLEX WITH AN ATP ANALOG</scope>
</reference>
<reference key="3">
    <citation type="journal article" date="2008" name="Mol. Cell">
        <title>Atomic structure of the KEOPS complex: an ancient protein kinase-containing molecular machine.</title>
        <authorList>
            <person name="Mao D.Y."/>
            <person name="Neculai D."/>
            <person name="Downey M."/>
            <person name="Orlicky S."/>
            <person name="Haffani Y.Z."/>
            <person name="Ceccarelli D.F."/>
            <person name="Ho J.S."/>
            <person name="Szilard R.K."/>
            <person name="Zhang W."/>
            <person name="Ho C.S."/>
            <person name="Wan L."/>
            <person name="Fares C."/>
            <person name="Rumpel S."/>
            <person name="Kurinov I."/>
            <person name="Arrowsmith C.H."/>
            <person name="Durocher D."/>
            <person name="Sicheri F."/>
        </authorList>
    </citation>
    <scope>X-RAY CRYSTALLOGRAPHY (2.67 ANGSTROMS) IN COMPLEXES WITH MAGNESIUM AND CGI121</scope>
    <scope>FUNCTION</scope>
    <scope>SUBUNIT</scope>
    <scope>ACTIVITY REGULATION</scope>
</reference>
<sequence>MICLGLEGTAEKTGVGIVTSDGEVLFNKTIMYKPPKQGINPREAADHHAETFPKLIKEAFEVVDKNEIDLIAFSQGPGLGPSLRVTATVARTLSLTLKKPIIGVNHCIAHIEIGKLTTEAEDPLTLYVSGGNTQVIAYVSKKYRVFGETLDIAVGNCLDQFARYVNLPHPGGPYIEELARKGKKLVDLPYTVKGMDIAFSGLLTAAMRAYDAGERLEDICYSLQEYAFSMLTEITERALAHTNKGEVMLVGGVAANNRLREMLKAMCEGQNVDFYVPPKEFCGDNGAMIAWLGLLMHKNGRWMSLDETKIIPNYRTDMVEVNWIKEIKGKKRKIPEHLIGKGAEADIKRDSYLDFDVIIKERVKKGYRDERLDENIRKSRTAREARYLALVKDFGIPAPYIFDVDLDNKRIMMSYINGKLAKDVIEDNLDIAYKIGEIVGKLHKNDVIHNDLTTSNFIFDKDLYIIDFGLGKISNLDEDKAVDLIVFKKAVLSTHHEKFDEIWERFLEGYKSVYDRWEIILELMKDVERRARYVE</sequence>
<dbReference type="EC" id="2.3.1.234" evidence="1"/>
<dbReference type="EC" id="2.7.11.1" evidence="1"/>
<dbReference type="EMBL" id="L77117">
    <property type="protein sequence ID" value="AAB99132.1"/>
    <property type="molecule type" value="Genomic_DNA"/>
</dbReference>
<dbReference type="RefSeq" id="WP_010870641.1">
    <property type="nucleotide sequence ID" value="NC_000909.1"/>
</dbReference>
<dbReference type="PDB" id="2VWB">
    <property type="method" value="X-ray"/>
    <property type="resolution" value="3.05 A"/>
    <property type="chains" value="A/B=1-535"/>
</dbReference>
<dbReference type="PDB" id="3EN9">
    <property type="method" value="X-ray"/>
    <property type="resolution" value="2.67 A"/>
    <property type="chains" value="A/B=1-535"/>
</dbReference>
<dbReference type="PDB" id="3ENH">
    <property type="method" value="X-ray"/>
    <property type="resolution" value="3.60 A"/>
    <property type="chains" value="A/B=1-535"/>
</dbReference>
<dbReference type="PDB" id="5JMV">
    <property type="method" value="X-ray"/>
    <property type="resolution" value="3.39 A"/>
    <property type="chains" value="A/B/C=1-335"/>
</dbReference>
<dbReference type="PDBsum" id="2VWB"/>
<dbReference type="PDBsum" id="3EN9"/>
<dbReference type="PDBsum" id="3ENH"/>
<dbReference type="PDBsum" id="5JMV"/>
<dbReference type="EMDB" id="EMD-42407"/>
<dbReference type="EMDB" id="EMD-42443"/>
<dbReference type="EMDB" id="EMD-46630"/>
<dbReference type="SMR" id="Q58530"/>
<dbReference type="FunCoup" id="Q58530">
    <property type="interactions" value="161"/>
</dbReference>
<dbReference type="STRING" id="243232.MJ_1130"/>
<dbReference type="PaxDb" id="243232-MJ_1130"/>
<dbReference type="EnsemblBacteria" id="AAB99132">
    <property type="protein sequence ID" value="AAB99132"/>
    <property type="gene ID" value="MJ_1130"/>
</dbReference>
<dbReference type="GeneID" id="1452026"/>
<dbReference type="KEGG" id="mja:MJ_1130"/>
<dbReference type="eggNOG" id="arCOG01183">
    <property type="taxonomic scope" value="Archaea"/>
</dbReference>
<dbReference type="eggNOG" id="arCOG01185">
    <property type="taxonomic scope" value="Archaea"/>
</dbReference>
<dbReference type="HOGENOM" id="CLU_023208_2_2_2"/>
<dbReference type="InParanoid" id="Q58530"/>
<dbReference type="OrthoDB" id="6818at2157"/>
<dbReference type="PhylomeDB" id="Q58530"/>
<dbReference type="EvolutionaryTrace" id="Q58530"/>
<dbReference type="Proteomes" id="UP000000805">
    <property type="component" value="Chromosome"/>
</dbReference>
<dbReference type="GO" id="GO:0005737">
    <property type="term" value="C:cytoplasm"/>
    <property type="evidence" value="ECO:0000318"/>
    <property type="project" value="GO_Central"/>
</dbReference>
<dbReference type="GO" id="GO:0000408">
    <property type="term" value="C:EKC/KEOPS complex"/>
    <property type="evidence" value="ECO:0000318"/>
    <property type="project" value="GO_Central"/>
</dbReference>
<dbReference type="GO" id="GO:0005524">
    <property type="term" value="F:ATP binding"/>
    <property type="evidence" value="ECO:0007669"/>
    <property type="project" value="UniProtKB-UniRule"/>
</dbReference>
<dbReference type="GO" id="GO:0005506">
    <property type="term" value="F:iron ion binding"/>
    <property type="evidence" value="ECO:0007669"/>
    <property type="project" value="UniProtKB-UniRule"/>
</dbReference>
<dbReference type="GO" id="GO:0004222">
    <property type="term" value="F:metalloendopeptidase activity"/>
    <property type="evidence" value="ECO:0007669"/>
    <property type="project" value="InterPro"/>
</dbReference>
<dbReference type="GO" id="GO:0061711">
    <property type="term" value="F:N(6)-L-threonylcarbamoyladenine synthase activity"/>
    <property type="evidence" value="ECO:0007669"/>
    <property type="project" value="UniProtKB-EC"/>
</dbReference>
<dbReference type="GO" id="GO:0106310">
    <property type="term" value="F:protein serine kinase activity"/>
    <property type="evidence" value="ECO:0007669"/>
    <property type="project" value="RHEA"/>
</dbReference>
<dbReference type="GO" id="GO:0004674">
    <property type="term" value="F:protein serine/threonine kinase activity"/>
    <property type="evidence" value="ECO:0007669"/>
    <property type="project" value="UniProtKB-KW"/>
</dbReference>
<dbReference type="GO" id="GO:0004712">
    <property type="term" value="F:protein serine/threonine/tyrosine kinase activity"/>
    <property type="evidence" value="ECO:0007669"/>
    <property type="project" value="UniProtKB-UniRule"/>
</dbReference>
<dbReference type="GO" id="GO:0008270">
    <property type="term" value="F:zinc ion binding"/>
    <property type="evidence" value="ECO:0007669"/>
    <property type="project" value="InterPro"/>
</dbReference>
<dbReference type="GO" id="GO:0002949">
    <property type="term" value="P:tRNA threonylcarbamoyladenosine modification"/>
    <property type="evidence" value="ECO:0007669"/>
    <property type="project" value="UniProtKB-UniRule"/>
</dbReference>
<dbReference type="CDD" id="cd24131">
    <property type="entry name" value="ASKHA_NBD_Kae1_arch_bac"/>
    <property type="match status" value="1"/>
</dbReference>
<dbReference type="FunFam" id="1.10.510.10:FF:000845">
    <property type="entry name" value="Probable bifunctional tRNA threonylcarbamoyladenosine biosynthesis protein"/>
    <property type="match status" value="1"/>
</dbReference>
<dbReference type="FunFam" id="3.30.420.40:FF:000284">
    <property type="entry name" value="Probable bifunctional tRNA threonylcarbamoyladenosine biosynthesis protein"/>
    <property type="match status" value="1"/>
</dbReference>
<dbReference type="FunFam" id="3.30.200.20:FF:000201">
    <property type="entry name" value="TP53-regulating kinase isoform X1"/>
    <property type="match status" value="1"/>
</dbReference>
<dbReference type="Gene3D" id="3.30.420.40">
    <property type="match status" value="2"/>
</dbReference>
<dbReference type="Gene3D" id="3.30.200.20">
    <property type="entry name" value="Phosphorylase Kinase, domain 1"/>
    <property type="match status" value="1"/>
</dbReference>
<dbReference type="Gene3D" id="1.10.510.10">
    <property type="entry name" value="Transferase(Phosphotransferase) domain 1"/>
    <property type="match status" value="1"/>
</dbReference>
<dbReference type="HAMAP" id="MF_01446">
    <property type="entry name" value="Kae1"/>
    <property type="match status" value="1"/>
</dbReference>
<dbReference type="HAMAP" id="MF_01447">
    <property type="entry name" value="Kae1_Bud32_arch"/>
    <property type="match status" value="1"/>
</dbReference>
<dbReference type="InterPro" id="IPR043129">
    <property type="entry name" value="ATPase_NBD"/>
</dbReference>
<dbReference type="InterPro" id="IPR022495">
    <property type="entry name" value="Bud32"/>
</dbReference>
<dbReference type="InterPro" id="IPR000905">
    <property type="entry name" value="Gcp-like_dom"/>
</dbReference>
<dbReference type="InterPro" id="IPR017861">
    <property type="entry name" value="KAE1/TsaD"/>
</dbReference>
<dbReference type="InterPro" id="IPR034680">
    <property type="entry name" value="Kae1_archaea_euk"/>
</dbReference>
<dbReference type="InterPro" id="IPR011009">
    <property type="entry name" value="Kinase-like_dom_sf"/>
</dbReference>
<dbReference type="InterPro" id="IPR017860">
    <property type="entry name" value="Peptidase_M22_CS"/>
</dbReference>
<dbReference type="InterPro" id="IPR000719">
    <property type="entry name" value="Prot_kinase_dom"/>
</dbReference>
<dbReference type="InterPro" id="IPR018934">
    <property type="entry name" value="RIO_dom"/>
</dbReference>
<dbReference type="InterPro" id="IPR009220">
    <property type="entry name" value="tRNA_threonyl_synthase/kinase"/>
</dbReference>
<dbReference type="InterPro" id="IPR008266">
    <property type="entry name" value="Tyr_kinase_AS"/>
</dbReference>
<dbReference type="NCBIfam" id="TIGR03724">
    <property type="entry name" value="arch_bud32"/>
    <property type="match status" value="1"/>
</dbReference>
<dbReference type="NCBIfam" id="TIGR03722">
    <property type="entry name" value="arch_KAE1"/>
    <property type="match status" value="1"/>
</dbReference>
<dbReference type="NCBIfam" id="TIGR00329">
    <property type="entry name" value="gcp_kae1"/>
    <property type="match status" value="1"/>
</dbReference>
<dbReference type="NCBIfam" id="NF007174">
    <property type="entry name" value="PRK09605.1"/>
    <property type="match status" value="1"/>
</dbReference>
<dbReference type="PANTHER" id="PTHR11735">
    <property type="entry name" value="TRNA N6-ADENOSINE THREONYLCARBAMOYLTRANSFERASE"/>
    <property type="match status" value="1"/>
</dbReference>
<dbReference type="PANTHER" id="PTHR11735:SF14">
    <property type="entry name" value="TRNA N6-ADENOSINE THREONYLCARBAMOYLTRANSFERASE"/>
    <property type="match status" value="1"/>
</dbReference>
<dbReference type="Pfam" id="PF01163">
    <property type="entry name" value="RIO1"/>
    <property type="match status" value="1"/>
</dbReference>
<dbReference type="Pfam" id="PF00814">
    <property type="entry name" value="TsaD"/>
    <property type="match status" value="1"/>
</dbReference>
<dbReference type="PIRSF" id="PIRSF036401">
    <property type="entry name" value="Gcp_STYKS"/>
    <property type="match status" value="1"/>
</dbReference>
<dbReference type="PRINTS" id="PR00789">
    <property type="entry name" value="OSIALOPTASE"/>
</dbReference>
<dbReference type="SUPFAM" id="SSF53067">
    <property type="entry name" value="Actin-like ATPase domain"/>
    <property type="match status" value="1"/>
</dbReference>
<dbReference type="SUPFAM" id="SSF56112">
    <property type="entry name" value="Protein kinase-like (PK-like)"/>
    <property type="match status" value="1"/>
</dbReference>
<dbReference type="PROSITE" id="PS01016">
    <property type="entry name" value="GLYCOPROTEASE"/>
    <property type="match status" value="1"/>
</dbReference>
<dbReference type="PROSITE" id="PS50011">
    <property type="entry name" value="PROTEIN_KINASE_DOM"/>
    <property type="match status" value="1"/>
</dbReference>
<dbReference type="PROSITE" id="PS00109">
    <property type="entry name" value="PROTEIN_KINASE_TYR"/>
    <property type="match status" value="1"/>
</dbReference>
<feature type="chain" id="PRO_0000096979" description="Probable bifunctional tRNA threonylcarbamoyladenosine biosynthesis protein">
    <location>
        <begin position="1"/>
        <end position="535"/>
    </location>
</feature>
<feature type="domain" description="Protein kinase" evidence="1">
    <location>
        <begin position="333"/>
        <end position="535"/>
    </location>
</feature>
<feature type="region of interest" description="Kae1">
    <location>
        <begin position="1"/>
        <end position="323"/>
    </location>
</feature>
<feature type="active site" description="Proton acceptor; for kinase activity" evidence="1">
    <location>
        <position position="451"/>
    </location>
</feature>
<feature type="binding site" evidence="4">
    <location>
        <position position="106"/>
    </location>
    <ligand>
        <name>Fe cation</name>
        <dbReference type="ChEBI" id="CHEBI:24875"/>
    </ligand>
</feature>
<feature type="binding site" evidence="4">
    <location>
        <position position="110"/>
    </location>
    <ligand>
        <name>Fe cation</name>
        <dbReference type="ChEBI" id="CHEBI:24875"/>
    </ligand>
</feature>
<feature type="binding site" evidence="4">
    <location>
        <begin position="127"/>
        <end position="131"/>
    </location>
    <ligand>
        <name>L-threonylcarbamoyladenylate</name>
        <dbReference type="ChEBI" id="CHEBI:73682"/>
    </ligand>
</feature>
<feature type="binding site" evidence="4">
    <location>
        <position position="127"/>
    </location>
    <ligand>
        <name>Fe cation</name>
        <dbReference type="ChEBI" id="CHEBI:24875"/>
    </ligand>
</feature>
<feature type="binding site" evidence="4">
    <location>
        <position position="159"/>
    </location>
    <ligand>
        <name>L-threonylcarbamoyladenylate</name>
        <dbReference type="ChEBI" id="CHEBI:73682"/>
    </ligand>
</feature>
<feature type="binding site" evidence="1">
    <location>
        <position position="172"/>
    </location>
    <ligand>
        <name>L-threonylcarbamoyladenylate</name>
        <dbReference type="ChEBI" id="CHEBI:73682"/>
    </ligand>
</feature>
<feature type="binding site" evidence="4">
    <location>
        <position position="176"/>
    </location>
    <ligand>
        <name>L-threonylcarbamoyladenylate</name>
        <dbReference type="ChEBI" id="CHEBI:73682"/>
    </ligand>
</feature>
<feature type="binding site" evidence="4">
    <location>
        <position position="256"/>
    </location>
    <ligand>
        <name>L-threonylcarbamoyladenylate</name>
        <dbReference type="ChEBI" id="CHEBI:73682"/>
    </ligand>
</feature>
<feature type="binding site" evidence="4">
    <location>
        <position position="284"/>
    </location>
    <ligand>
        <name>Fe cation</name>
        <dbReference type="ChEBI" id="CHEBI:24875"/>
    </ligand>
</feature>
<feature type="binding site" evidence="1">
    <location>
        <begin position="339"/>
        <end position="347"/>
    </location>
    <ligand>
        <name>ATP</name>
        <dbReference type="ChEBI" id="CHEBI:30616"/>
    </ligand>
</feature>
<feature type="binding site" evidence="1">
    <location>
        <position position="360"/>
    </location>
    <ligand>
        <name>ATP</name>
        <dbReference type="ChEBI" id="CHEBI:30616"/>
    </ligand>
</feature>
<feature type="strand" evidence="5">
    <location>
        <begin position="2"/>
        <end position="7"/>
    </location>
</feature>
<feature type="strand" evidence="5">
    <location>
        <begin position="9"/>
        <end position="19"/>
    </location>
</feature>
<feature type="strand" evidence="6">
    <location>
        <begin position="20"/>
        <end position="22"/>
    </location>
</feature>
<feature type="strand" evidence="5">
    <location>
        <begin position="24"/>
        <end position="31"/>
    </location>
</feature>
<feature type="strand" evidence="5">
    <location>
        <begin position="37"/>
        <end position="40"/>
    </location>
</feature>
<feature type="helix" evidence="5">
    <location>
        <begin position="44"/>
        <end position="62"/>
    </location>
</feature>
<feature type="helix" evidence="5">
    <location>
        <begin position="65"/>
        <end position="67"/>
    </location>
</feature>
<feature type="strand" evidence="5">
    <location>
        <begin position="70"/>
        <end position="78"/>
    </location>
</feature>
<feature type="helix" evidence="5">
    <location>
        <begin position="80"/>
        <end position="97"/>
    </location>
</feature>
<feature type="strand" evidence="5">
    <location>
        <begin position="101"/>
        <end position="105"/>
    </location>
</feature>
<feature type="helix" evidence="5">
    <location>
        <begin position="106"/>
        <end position="117"/>
    </location>
</feature>
<feature type="strand" evidence="5">
    <location>
        <begin position="124"/>
        <end position="128"/>
    </location>
</feature>
<feature type="strand" evidence="5">
    <location>
        <begin position="133"/>
        <end position="139"/>
    </location>
</feature>
<feature type="strand" evidence="5">
    <location>
        <begin position="142"/>
        <end position="152"/>
    </location>
</feature>
<feature type="helix" evidence="5">
    <location>
        <begin position="154"/>
        <end position="164"/>
    </location>
</feature>
<feature type="helix" evidence="5">
    <location>
        <begin position="172"/>
        <end position="180"/>
    </location>
</feature>
<feature type="helix" evidence="5">
    <location>
        <begin position="200"/>
        <end position="211"/>
    </location>
</feature>
<feature type="helix" evidence="5">
    <location>
        <begin position="216"/>
        <end position="242"/>
    </location>
</feature>
<feature type="strand" evidence="5">
    <location>
        <begin position="245"/>
        <end position="251"/>
    </location>
</feature>
<feature type="helix" evidence="5">
    <location>
        <begin position="252"/>
        <end position="255"/>
    </location>
</feature>
<feature type="helix" evidence="5">
    <location>
        <begin position="257"/>
        <end position="269"/>
    </location>
</feature>
<feature type="strand" evidence="5">
    <location>
        <begin position="273"/>
        <end position="275"/>
    </location>
</feature>
<feature type="helix" evidence="5">
    <location>
        <begin position="279"/>
        <end position="282"/>
    </location>
</feature>
<feature type="helix" evidence="5">
    <location>
        <begin position="286"/>
        <end position="298"/>
    </location>
</feature>
<feature type="helix" evidence="5">
    <location>
        <begin position="305"/>
        <end position="307"/>
    </location>
</feature>
<feature type="helix" evidence="6">
    <location>
        <begin position="316"/>
        <end position="318"/>
    </location>
</feature>
<feature type="strand" evidence="5">
    <location>
        <begin position="345"/>
        <end position="351"/>
    </location>
</feature>
<feature type="strand" evidence="5">
    <location>
        <begin position="356"/>
        <end position="362"/>
    </location>
</feature>
<feature type="helix" evidence="5">
    <location>
        <begin position="370"/>
        <end position="390"/>
    </location>
</feature>
<feature type="helix" evidence="5">
    <location>
        <begin position="391"/>
        <end position="394"/>
    </location>
</feature>
<feature type="strand" evidence="5">
    <location>
        <begin position="401"/>
        <end position="405"/>
    </location>
</feature>
<feature type="turn" evidence="5">
    <location>
        <begin position="406"/>
        <end position="409"/>
    </location>
</feature>
<feature type="strand" evidence="5">
    <location>
        <begin position="410"/>
        <end position="414"/>
    </location>
</feature>
<feature type="strand" evidence="5">
    <location>
        <begin position="418"/>
        <end position="420"/>
    </location>
</feature>
<feature type="helix" evidence="5">
    <location>
        <begin position="421"/>
        <end position="424"/>
    </location>
</feature>
<feature type="helix" evidence="5">
    <location>
        <begin position="430"/>
        <end position="444"/>
    </location>
</feature>
<feature type="strand" evidence="5">
    <location>
        <begin position="456"/>
        <end position="465"/>
    </location>
</feature>
<feature type="helix" evidence="5">
    <location>
        <begin position="477"/>
        <end position="494"/>
    </location>
</feature>
<feature type="helix" evidence="5">
    <location>
        <begin position="496"/>
        <end position="498"/>
    </location>
</feature>
<feature type="helix" evidence="5">
    <location>
        <begin position="499"/>
        <end position="513"/>
    </location>
</feature>
<feature type="helix" evidence="5">
    <location>
        <begin position="517"/>
        <end position="528"/>
    </location>
</feature>
<name>KAE1B_METJA</name>
<gene>
    <name type="ordered locus">MJ1130</name>
</gene>
<organism>
    <name type="scientific">Methanocaldococcus jannaschii (strain ATCC 43067 / DSM 2661 / JAL-1 / JCM 10045 / NBRC 100440)</name>
    <name type="common">Methanococcus jannaschii</name>
    <dbReference type="NCBI Taxonomy" id="243232"/>
    <lineage>
        <taxon>Archaea</taxon>
        <taxon>Methanobacteriati</taxon>
        <taxon>Methanobacteriota</taxon>
        <taxon>Methanomada group</taxon>
        <taxon>Methanococci</taxon>
        <taxon>Methanococcales</taxon>
        <taxon>Methanocaldococcaceae</taxon>
        <taxon>Methanocaldococcus</taxon>
    </lineage>
</organism>
<proteinExistence type="evidence at protein level"/>
<evidence type="ECO:0000255" key="1">
    <source>
        <dbReference type="HAMAP-Rule" id="MF_01447"/>
    </source>
</evidence>
<evidence type="ECO:0000269" key="2">
    <source>
    </source>
</evidence>
<evidence type="ECO:0000269" key="3">
    <source>
    </source>
</evidence>
<evidence type="ECO:0000305" key="4"/>
<evidence type="ECO:0007829" key="5">
    <source>
        <dbReference type="PDB" id="3EN9"/>
    </source>
</evidence>
<evidence type="ECO:0007829" key="6">
    <source>
        <dbReference type="PDB" id="5JMV"/>
    </source>
</evidence>
<accession>Q58530</accession>
<comment type="function">
    <text evidence="1 2">Required for the formation of a threonylcarbamoyl group on adenosine at position 37 (t(6)A37) in tRNAs that read codons beginning with adenine. Is a component of the KEOPS complex that is probably involved in the transfer of the threonylcarbamoyl moiety of threonylcarbamoyl-AMP (TC-AMP) to the N6 group of A37. The Kae1 domain likely plays a direct catalytic role in this reaction (By similarity). The Bud32 domain probably displays kinase activity that regulates Kae1 function. In vitro, exhibits low ATPase activity, but does not bind DNA and does not have endonuclease activity.</text>
</comment>
<comment type="catalytic activity">
    <reaction evidence="1">
        <text>L-seryl-[protein] + ATP = O-phospho-L-seryl-[protein] + ADP + H(+)</text>
        <dbReference type="Rhea" id="RHEA:17989"/>
        <dbReference type="Rhea" id="RHEA-COMP:9863"/>
        <dbReference type="Rhea" id="RHEA-COMP:11604"/>
        <dbReference type="ChEBI" id="CHEBI:15378"/>
        <dbReference type="ChEBI" id="CHEBI:29999"/>
        <dbReference type="ChEBI" id="CHEBI:30616"/>
        <dbReference type="ChEBI" id="CHEBI:83421"/>
        <dbReference type="ChEBI" id="CHEBI:456216"/>
        <dbReference type="EC" id="2.7.11.1"/>
    </reaction>
</comment>
<comment type="catalytic activity">
    <reaction evidence="1">
        <text>L-threonyl-[protein] + ATP = O-phospho-L-threonyl-[protein] + ADP + H(+)</text>
        <dbReference type="Rhea" id="RHEA:46608"/>
        <dbReference type="Rhea" id="RHEA-COMP:11060"/>
        <dbReference type="Rhea" id="RHEA-COMP:11605"/>
        <dbReference type="ChEBI" id="CHEBI:15378"/>
        <dbReference type="ChEBI" id="CHEBI:30013"/>
        <dbReference type="ChEBI" id="CHEBI:30616"/>
        <dbReference type="ChEBI" id="CHEBI:61977"/>
        <dbReference type="ChEBI" id="CHEBI:456216"/>
        <dbReference type="EC" id="2.7.11.1"/>
    </reaction>
</comment>
<comment type="catalytic activity">
    <reaction evidence="1">
        <text>L-threonylcarbamoyladenylate + adenosine(37) in tRNA = N(6)-L-threonylcarbamoyladenosine(37) in tRNA + AMP + H(+)</text>
        <dbReference type="Rhea" id="RHEA:37059"/>
        <dbReference type="Rhea" id="RHEA-COMP:10162"/>
        <dbReference type="Rhea" id="RHEA-COMP:10163"/>
        <dbReference type="ChEBI" id="CHEBI:15378"/>
        <dbReference type="ChEBI" id="CHEBI:73682"/>
        <dbReference type="ChEBI" id="CHEBI:74411"/>
        <dbReference type="ChEBI" id="CHEBI:74418"/>
        <dbReference type="ChEBI" id="CHEBI:456215"/>
        <dbReference type="EC" id="2.3.1.234"/>
    </reaction>
</comment>
<comment type="cofactor">
    <cofactor evidence="1">
        <name>Fe(2+)</name>
        <dbReference type="ChEBI" id="CHEBI:29033"/>
    </cofactor>
    <text evidence="1">Binds 1 Fe(2+) ion per subunit.</text>
</comment>
<comment type="activity regulation">
    <text evidence="2">Activity provided by the Kae1 region seems to be regulated via phosphorylation by the protein kinase Bud32, which is itself activated by Cgi121.</text>
</comment>
<comment type="subunit">
    <text evidence="1 2 3">Component of the KEOPS complex that consists of Kae1, Bud32, Cgi121 and Pcc1; the whole complex dimerizes.</text>
</comment>
<comment type="subcellular location">
    <subcellularLocation>
        <location evidence="1">Cytoplasm</location>
    </subcellularLocation>
</comment>
<comment type="similarity">
    <text evidence="1">In the N-terminal section; belongs to the KAE1 / TsaD family.</text>
</comment>
<comment type="similarity">
    <text evidence="1">In the C-terminal section; belongs to the protein kinase superfamily. Tyr protein kinase family. BUD32 subfamily.</text>
</comment>
<protein>
    <recommendedName>
        <fullName evidence="1">Probable bifunctional tRNA threonylcarbamoyladenosine biosynthesis protein</fullName>
    </recommendedName>
    <domain>
        <recommendedName>
            <fullName evidence="1">tRNA N6-adenosine threonylcarbamoyltransferase</fullName>
            <ecNumber evidence="1">2.3.1.234</ecNumber>
        </recommendedName>
        <alternativeName>
            <fullName>N6-L-threonylcarbamoyladenine synthase</fullName>
            <shortName>t(6)A synthase</shortName>
        </alternativeName>
        <alternativeName>
            <fullName evidence="1">t(6)A37 threonylcarbamoyladenosine biosynthesis protein Kae1</fullName>
        </alternativeName>
        <alternativeName>
            <fullName evidence="1">tRNA threonylcarbamoyladenosine biosynthesis protein Kae1</fullName>
        </alternativeName>
    </domain>
    <domain>
        <recommendedName>
            <fullName evidence="1">Serine/threonine-protein kinase Bud32</fullName>
            <ecNumber evidence="1">2.7.11.1</ecNumber>
        </recommendedName>
    </domain>
</protein>
<keyword id="KW-0002">3D-structure</keyword>
<keyword id="KW-0012">Acyltransferase</keyword>
<keyword id="KW-0067">ATP-binding</keyword>
<keyword id="KW-0963">Cytoplasm</keyword>
<keyword id="KW-0408">Iron</keyword>
<keyword id="KW-0418">Kinase</keyword>
<keyword id="KW-0479">Metal-binding</keyword>
<keyword id="KW-0511">Multifunctional enzyme</keyword>
<keyword id="KW-0547">Nucleotide-binding</keyword>
<keyword id="KW-1185">Reference proteome</keyword>
<keyword id="KW-0723">Serine/threonine-protein kinase</keyword>
<keyword id="KW-0808">Transferase</keyword>
<keyword id="KW-0819">tRNA processing</keyword>